<reference key="1">
    <citation type="journal article" date="2002" name="Lancet">
        <title>Genome and virulence determinants of high virulence community-acquired MRSA.</title>
        <authorList>
            <person name="Baba T."/>
            <person name="Takeuchi F."/>
            <person name="Kuroda M."/>
            <person name="Yuzawa H."/>
            <person name="Aoki K."/>
            <person name="Oguchi A."/>
            <person name="Nagai Y."/>
            <person name="Iwama N."/>
            <person name="Asano K."/>
            <person name="Naimi T."/>
            <person name="Kuroda H."/>
            <person name="Cui L."/>
            <person name="Yamamoto K."/>
            <person name="Hiramatsu K."/>
        </authorList>
    </citation>
    <scope>NUCLEOTIDE SEQUENCE [LARGE SCALE GENOMIC DNA]</scope>
    <source>
        <strain>MW2</strain>
    </source>
</reference>
<feature type="chain" id="PRO_0000341857" description="2-succinyl-5-enolpyruvyl-6-hydroxy-3-cyclohexene-1-carboxylate synthase">
    <location>
        <begin position="1"/>
        <end position="557"/>
    </location>
</feature>
<dbReference type="EC" id="2.2.1.9" evidence="1"/>
<dbReference type="EMBL" id="BA000033">
    <property type="protein sequence ID" value="BAB94792.1"/>
    <property type="molecule type" value="Genomic_DNA"/>
</dbReference>
<dbReference type="RefSeq" id="WP_000526696.1">
    <property type="nucleotide sequence ID" value="NC_003923.1"/>
</dbReference>
<dbReference type="SMR" id="Q8NXA2"/>
<dbReference type="KEGG" id="sam:MW0927"/>
<dbReference type="HOGENOM" id="CLU_006051_3_0_9"/>
<dbReference type="UniPathway" id="UPA00079"/>
<dbReference type="UniPathway" id="UPA01057">
    <property type="reaction ID" value="UER00164"/>
</dbReference>
<dbReference type="GO" id="GO:0070204">
    <property type="term" value="F:2-succinyl-5-enolpyruvyl-6-hydroxy-3-cyclohexene-1-carboxylic-acid synthase activity"/>
    <property type="evidence" value="ECO:0007669"/>
    <property type="project" value="UniProtKB-UniRule"/>
</dbReference>
<dbReference type="GO" id="GO:0000287">
    <property type="term" value="F:magnesium ion binding"/>
    <property type="evidence" value="ECO:0007669"/>
    <property type="project" value="UniProtKB-UniRule"/>
</dbReference>
<dbReference type="GO" id="GO:0030145">
    <property type="term" value="F:manganese ion binding"/>
    <property type="evidence" value="ECO:0007669"/>
    <property type="project" value="UniProtKB-UniRule"/>
</dbReference>
<dbReference type="GO" id="GO:0030976">
    <property type="term" value="F:thiamine pyrophosphate binding"/>
    <property type="evidence" value="ECO:0007669"/>
    <property type="project" value="UniProtKB-UniRule"/>
</dbReference>
<dbReference type="GO" id="GO:0009234">
    <property type="term" value="P:menaquinone biosynthetic process"/>
    <property type="evidence" value="ECO:0007669"/>
    <property type="project" value="UniProtKB-UniRule"/>
</dbReference>
<dbReference type="CDD" id="cd07037">
    <property type="entry name" value="TPP_PYR_MenD"/>
    <property type="match status" value="1"/>
</dbReference>
<dbReference type="CDD" id="cd02009">
    <property type="entry name" value="TPP_SHCHC_synthase"/>
    <property type="match status" value="1"/>
</dbReference>
<dbReference type="Gene3D" id="3.40.50.970">
    <property type="match status" value="2"/>
</dbReference>
<dbReference type="Gene3D" id="3.40.50.1220">
    <property type="entry name" value="TPP-binding domain"/>
    <property type="match status" value="1"/>
</dbReference>
<dbReference type="HAMAP" id="MF_01659">
    <property type="entry name" value="MenD"/>
    <property type="match status" value="1"/>
</dbReference>
<dbReference type="InterPro" id="IPR004433">
    <property type="entry name" value="MenaQ_synth_MenD"/>
</dbReference>
<dbReference type="InterPro" id="IPR032264">
    <property type="entry name" value="MenD_middle"/>
</dbReference>
<dbReference type="InterPro" id="IPR029061">
    <property type="entry name" value="THDP-binding"/>
</dbReference>
<dbReference type="InterPro" id="IPR012001">
    <property type="entry name" value="Thiamin_PyroP_enz_TPP-bd_dom"/>
</dbReference>
<dbReference type="InterPro" id="IPR011766">
    <property type="entry name" value="TPP_enzyme_TPP-bd"/>
</dbReference>
<dbReference type="NCBIfam" id="TIGR00173">
    <property type="entry name" value="menD"/>
    <property type="match status" value="1"/>
</dbReference>
<dbReference type="PANTHER" id="PTHR42916">
    <property type="entry name" value="2-SUCCINYL-5-ENOLPYRUVYL-6-HYDROXY-3-CYCLOHEXENE-1-CARBOXYLATE SYNTHASE"/>
    <property type="match status" value="1"/>
</dbReference>
<dbReference type="PANTHER" id="PTHR42916:SF1">
    <property type="entry name" value="PROTEIN PHYLLO, CHLOROPLASTIC"/>
    <property type="match status" value="1"/>
</dbReference>
<dbReference type="Pfam" id="PF02775">
    <property type="entry name" value="TPP_enzyme_C"/>
    <property type="match status" value="1"/>
</dbReference>
<dbReference type="Pfam" id="PF16582">
    <property type="entry name" value="TPP_enzyme_M_2"/>
    <property type="match status" value="1"/>
</dbReference>
<dbReference type="Pfam" id="PF02776">
    <property type="entry name" value="TPP_enzyme_N"/>
    <property type="match status" value="1"/>
</dbReference>
<dbReference type="PIRSF" id="PIRSF004983">
    <property type="entry name" value="MenD"/>
    <property type="match status" value="1"/>
</dbReference>
<dbReference type="SUPFAM" id="SSF52518">
    <property type="entry name" value="Thiamin diphosphate-binding fold (THDP-binding)"/>
    <property type="match status" value="2"/>
</dbReference>
<proteinExistence type="inferred from homology"/>
<sequence length="557" mass="63086">MGNHKAALTKQVFTFASELYAYGVREVVISPGSRSTPLALAFEAHPNIKTWIHPDERSAAFFAVGLIKGSERPVAILCTSGTAAANYTPAIAESQISRIPLIVLTSDRPHELRSVGAPQAINQVNMFNNYVSYEFDMPIADDSKETINAIYYQMQIASQYLYGPHKGPIHFNLPFRDPLTPDLNATELLTSEMKILPHYQKSIDASALRHILNKKKGLIIVGDMQHQEVDQILTYSTIYDLPILADPLSHLRKFDHPNVICTYDLLFRSGLDLNVDFVIRVGKPVISKKLNQWLKKTDAFQILVQNNDKIDVFPIAPDISYEISANDFFRSLMEDTTINRVSWLEKWQRLEKKGRKEIKCYLEQATDESAFVGELIKKTSEKDALFISNSMPIRDVDNLLLNKNIDVYANRGANGIDGIVSTALGMAVHKRITLLIGDLSFYHDMNGLLMSKLNNIQMNIVLLNNDGGGIFSYLPQKESATDYFERLFGTPTGLDFEYTAKLYQFDFKRFNSVSEFKNATLLSETSTIYELITNREDNFKQHQILYQKLSEMIHGTL</sequence>
<protein>
    <recommendedName>
        <fullName evidence="1">2-succinyl-5-enolpyruvyl-6-hydroxy-3-cyclohexene-1-carboxylate synthase</fullName>
        <shortName evidence="1">SEPHCHC synthase</shortName>
        <ecNumber evidence="1">2.2.1.9</ecNumber>
    </recommendedName>
    <alternativeName>
        <fullName evidence="1">Menaquinone biosynthesis protein MenD</fullName>
    </alternativeName>
</protein>
<name>MEND_STAAW</name>
<accession>Q8NXA2</accession>
<organism>
    <name type="scientific">Staphylococcus aureus (strain MW2)</name>
    <dbReference type="NCBI Taxonomy" id="196620"/>
    <lineage>
        <taxon>Bacteria</taxon>
        <taxon>Bacillati</taxon>
        <taxon>Bacillota</taxon>
        <taxon>Bacilli</taxon>
        <taxon>Bacillales</taxon>
        <taxon>Staphylococcaceae</taxon>
        <taxon>Staphylococcus</taxon>
    </lineage>
</organism>
<comment type="function">
    <text evidence="1">Catalyzes the thiamine diphosphate-dependent decarboxylation of 2-oxoglutarate and the subsequent addition of the resulting succinic semialdehyde-thiamine pyrophosphate anion to isochorismate to yield 2-succinyl-5-enolpyruvyl-6-hydroxy-3-cyclohexene-1-carboxylate (SEPHCHC).</text>
</comment>
<comment type="catalytic activity">
    <reaction evidence="1">
        <text>isochorismate + 2-oxoglutarate + H(+) = 5-enolpyruvoyl-6-hydroxy-2-succinyl-cyclohex-3-ene-1-carboxylate + CO2</text>
        <dbReference type="Rhea" id="RHEA:25593"/>
        <dbReference type="ChEBI" id="CHEBI:15378"/>
        <dbReference type="ChEBI" id="CHEBI:16526"/>
        <dbReference type="ChEBI" id="CHEBI:16810"/>
        <dbReference type="ChEBI" id="CHEBI:29780"/>
        <dbReference type="ChEBI" id="CHEBI:58818"/>
        <dbReference type="EC" id="2.2.1.9"/>
    </reaction>
</comment>
<comment type="cofactor">
    <cofactor evidence="1">
        <name>Mg(2+)</name>
        <dbReference type="ChEBI" id="CHEBI:18420"/>
    </cofactor>
    <cofactor evidence="1">
        <name>Mn(2+)</name>
        <dbReference type="ChEBI" id="CHEBI:29035"/>
    </cofactor>
</comment>
<comment type="cofactor">
    <cofactor evidence="1">
        <name>thiamine diphosphate</name>
        <dbReference type="ChEBI" id="CHEBI:58937"/>
    </cofactor>
    <text evidence="1">Binds 1 thiamine pyrophosphate per subunit.</text>
</comment>
<comment type="pathway">
    <text evidence="1">Quinol/quinone metabolism; 1,4-dihydroxy-2-naphthoate biosynthesis; 1,4-dihydroxy-2-naphthoate from chorismate: step 2/7.</text>
</comment>
<comment type="pathway">
    <text evidence="1">Quinol/quinone metabolism; menaquinone biosynthesis.</text>
</comment>
<comment type="subunit">
    <text evidence="1">Homodimer.</text>
</comment>
<comment type="similarity">
    <text evidence="1">Belongs to the TPP enzyme family. MenD subfamily.</text>
</comment>
<keyword id="KW-0460">Magnesium</keyword>
<keyword id="KW-0464">Manganese</keyword>
<keyword id="KW-0474">Menaquinone biosynthesis</keyword>
<keyword id="KW-0479">Metal-binding</keyword>
<keyword id="KW-0786">Thiamine pyrophosphate</keyword>
<keyword id="KW-0808">Transferase</keyword>
<gene>
    <name evidence="1" type="primary">menD</name>
    <name type="ordered locus">MW0927</name>
</gene>
<evidence type="ECO:0000255" key="1">
    <source>
        <dbReference type="HAMAP-Rule" id="MF_01659"/>
    </source>
</evidence>